<dbReference type="EC" id="2.7.2.8" evidence="1"/>
<dbReference type="EMBL" id="CP000699">
    <property type="protein sequence ID" value="ABQ69262.1"/>
    <property type="molecule type" value="Genomic_DNA"/>
</dbReference>
<dbReference type="SMR" id="A5VAE6"/>
<dbReference type="STRING" id="392499.Swit_2910"/>
<dbReference type="PaxDb" id="392499-Swit_2910"/>
<dbReference type="KEGG" id="swi:Swit_2910"/>
<dbReference type="eggNOG" id="COG0548">
    <property type="taxonomic scope" value="Bacteria"/>
</dbReference>
<dbReference type="HOGENOM" id="CLU_053680_0_0_5"/>
<dbReference type="OrthoDB" id="9803155at2"/>
<dbReference type="UniPathway" id="UPA00068">
    <property type="reaction ID" value="UER00107"/>
</dbReference>
<dbReference type="Proteomes" id="UP000001989">
    <property type="component" value="Chromosome"/>
</dbReference>
<dbReference type="GO" id="GO:0005737">
    <property type="term" value="C:cytoplasm"/>
    <property type="evidence" value="ECO:0007669"/>
    <property type="project" value="UniProtKB-SubCell"/>
</dbReference>
<dbReference type="GO" id="GO:0003991">
    <property type="term" value="F:acetylglutamate kinase activity"/>
    <property type="evidence" value="ECO:0007669"/>
    <property type="project" value="UniProtKB-UniRule"/>
</dbReference>
<dbReference type="GO" id="GO:0005524">
    <property type="term" value="F:ATP binding"/>
    <property type="evidence" value="ECO:0007669"/>
    <property type="project" value="UniProtKB-UniRule"/>
</dbReference>
<dbReference type="GO" id="GO:0042450">
    <property type="term" value="P:arginine biosynthetic process via ornithine"/>
    <property type="evidence" value="ECO:0007669"/>
    <property type="project" value="UniProtKB-UniRule"/>
</dbReference>
<dbReference type="GO" id="GO:0006526">
    <property type="term" value="P:L-arginine biosynthetic process"/>
    <property type="evidence" value="ECO:0007669"/>
    <property type="project" value="UniProtKB-UniPathway"/>
</dbReference>
<dbReference type="CDD" id="cd04250">
    <property type="entry name" value="AAK_NAGK-C"/>
    <property type="match status" value="1"/>
</dbReference>
<dbReference type="FunFam" id="3.40.1160.10:FF:000004">
    <property type="entry name" value="Acetylglutamate kinase"/>
    <property type="match status" value="1"/>
</dbReference>
<dbReference type="Gene3D" id="3.40.1160.10">
    <property type="entry name" value="Acetylglutamate kinase-like"/>
    <property type="match status" value="1"/>
</dbReference>
<dbReference type="HAMAP" id="MF_00082">
    <property type="entry name" value="ArgB"/>
    <property type="match status" value="1"/>
</dbReference>
<dbReference type="InterPro" id="IPR036393">
    <property type="entry name" value="AceGlu_kinase-like_sf"/>
</dbReference>
<dbReference type="InterPro" id="IPR004662">
    <property type="entry name" value="AcgluKinase_fam"/>
</dbReference>
<dbReference type="InterPro" id="IPR037528">
    <property type="entry name" value="ArgB"/>
</dbReference>
<dbReference type="InterPro" id="IPR001048">
    <property type="entry name" value="Asp/Glu/Uridylate_kinase"/>
</dbReference>
<dbReference type="InterPro" id="IPR001057">
    <property type="entry name" value="Glu/AcGlu_kinase"/>
</dbReference>
<dbReference type="InterPro" id="IPR041727">
    <property type="entry name" value="NAGK-C"/>
</dbReference>
<dbReference type="NCBIfam" id="TIGR00761">
    <property type="entry name" value="argB"/>
    <property type="match status" value="1"/>
</dbReference>
<dbReference type="PANTHER" id="PTHR23342">
    <property type="entry name" value="N-ACETYLGLUTAMATE SYNTHASE"/>
    <property type="match status" value="1"/>
</dbReference>
<dbReference type="PANTHER" id="PTHR23342:SF0">
    <property type="entry name" value="N-ACETYLGLUTAMATE SYNTHASE, MITOCHONDRIAL"/>
    <property type="match status" value="1"/>
</dbReference>
<dbReference type="Pfam" id="PF00696">
    <property type="entry name" value="AA_kinase"/>
    <property type="match status" value="1"/>
</dbReference>
<dbReference type="PIRSF" id="PIRSF000728">
    <property type="entry name" value="NAGK"/>
    <property type="match status" value="1"/>
</dbReference>
<dbReference type="PRINTS" id="PR00474">
    <property type="entry name" value="GLU5KINASE"/>
</dbReference>
<dbReference type="SUPFAM" id="SSF53633">
    <property type="entry name" value="Carbamate kinase-like"/>
    <property type="match status" value="1"/>
</dbReference>
<comment type="function">
    <text evidence="1">Catalyzes the ATP-dependent phosphorylation of N-acetyl-L-glutamate.</text>
</comment>
<comment type="catalytic activity">
    <reaction evidence="1">
        <text>N-acetyl-L-glutamate + ATP = N-acetyl-L-glutamyl 5-phosphate + ADP</text>
        <dbReference type="Rhea" id="RHEA:14629"/>
        <dbReference type="ChEBI" id="CHEBI:30616"/>
        <dbReference type="ChEBI" id="CHEBI:44337"/>
        <dbReference type="ChEBI" id="CHEBI:57936"/>
        <dbReference type="ChEBI" id="CHEBI:456216"/>
        <dbReference type="EC" id="2.7.2.8"/>
    </reaction>
</comment>
<comment type="pathway">
    <text evidence="1">Amino-acid biosynthesis; L-arginine biosynthesis; N(2)-acetyl-L-ornithine from L-glutamate: step 2/4.</text>
</comment>
<comment type="subcellular location">
    <subcellularLocation>
        <location evidence="1">Cytoplasm</location>
    </subcellularLocation>
</comment>
<comment type="similarity">
    <text evidence="1">Belongs to the acetylglutamate kinase family. ArgB subfamily.</text>
</comment>
<proteinExistence type="inferred from homology"/>
<feature type="chain" id="PRO_0000335668" description="Acetylglutamate kinase">
    <location>
        <begin position="1"/>
        <end position="301"/>
    </location>
</feature>
<feature type="binding site" evidence="1">
    <location>
        <begin position="71"/>
        <end position="72"/>
    </location>
    <ligand>
        <name>substrate</name>
    </ligand>
</feature>
<feature type="binding site" evidence="1">
    <location>
        <position position="93"/>
    </location>
    <ligand>
        <name>substrate</name>
    </ligand>
</feature>
<feature type="binding site" evidence="1">
    <location>
        <position position="198"/>
    </location>
    <ligand>
        <name>substrate</name>
    </ligand>
</feature>
<feature type="site" description="Transition state stabilizer" evidence="1">
    <location>
        <position position="36"/>
    </location>
</feature>
<feature type="site" description="Transition state stabilizer" evidence="1">
    <location>
        <position position="258"/>
    </location>
</feature>
<organism>
    <name type="scientific">Rhizorhabdus wittichii (strain DSM 6014 / CCUG 31198 / JCM 15750 / NBRC 105917 / EY 4224 / RW1)</name>
    <name type="common">Sphingomonas wittichii</name>
    <dbReference type="NCBI Taxonomy" id="392499"/>
    <lineage>
        <taxon>Bacteria</taxon>
        <taxon>Pseudomonadati</taxon>
        <taxon>Pseudomonadota</taxon>
        <taxon>Alphaproteobacteria</taxon>
        <taxon>Sphingomonadales</taxon>
        <taxon>Sphingomonadaceae</taxon>
        <taxon>Rhizorhabdus</taxon>
    </lineage>
</organism>
<evidence type="ECO:0000255" key="1">
    <source>
        <dbReference type="HAMAP-Rule" id="MF_00082"/>
    </source>
</evidence>
<name>ARGB_RHIWR</name>
<sequence length="301" mass="31838">MSTDHSPDPLLLTKAETLVEALPYMQRYAGETFVVKYGGHAMGDPEAARDFAEDIVLLKAVGINPVVVHGGGPQIGKMLKTLGVESRFVDGLRVTDAETARVAEMVLCGSINKEIVSWIAQAGGRAVGLSGKDGRMVVAEKVRRTQRDPDSNIEKAVDLGFVGEPADIDRRVIDTISKAGMIPVVAPIAIGEDGHTYNVNADTMAGAIAIALGAARLFLLTDVAGVLDKEKKLIRDLTPRQINALREDGTIQGGMIPKLETCVHAVEGGVDAAVILDGRVPHAMLIEAFTRRGAGTLIGMG</sequence>
<protein>
    <recommendedName>
        <fullName evidence="1">Acetylglutamate kinase</fullName>
        <ecNumber evidence="1">2.7.2.8</ecNumber>
    </recommendedName>
    <alternativeName>
        <fullName evidence="1">N-acetyl-L-glutamate 5-phosphotransferase</fullName>
    </alternativeName>
    <alternativeName>
        <fullName evidence="1">NAG kinase</fullName>
        <shortName evidence="1">NAGK</shortName>
    </alternativeName>
</protein>
<keyword id="KW-0028">Amino-acid biosynthesis</keyword>
<keyword id="KW-0055">Arginine biosynthesis</keyword>
<keyword id="KW-0067">ATP-binding</keyword>
<keyword id="KW-0963">Cytoplasm</keyword>
<keyword id="KW-0418">Kinase</keyword>
<keyword id="KW-0547">Nucleotide-binding</keyword>
<keyword id="KW-1185">Reference proteome</keyword>
<keyword id="KW-0808">Transferase</keyword>
<reference key="1">
    <citation type="journal article" date="2010" name="J. Bacteriol.">
        <title>Genome sequence of the dioxin-mineralizing bacterium Sphingomonas wittichii RW1.</title>
        <authorList>
            <person name="Miller T.R."/>
            <person name="Delcher A.L."/>
            <person name="Salzberg S.L."/>
            <person name="Saunders E."/>
            <person name="Detter J.C."/>
            <person name="Halden R.U."/>
        </authorList>
    </citation>
    <scope>NUCLEOTIDE SEQUENCE [LARGE SCALE GENOMIC DNA]</scope>
    <source>
        <strain>DSM 6014 / CCUG 31198 / JCM 15750 / NBRC 105917 / EY 4224 / RW1</strain>
    </source>
</reference>
<accession>A5VAE6</accession>
<gene>
    <name evidence="1" type="primary">argB</name>
    <name type="ordered locus">Swit_2910</name>
</gene>